<sequence>MKPIKEIADQLELKDDILYPYGHYIAKIDHRFLKSLENHEDGKLILVTAVTPTPAGEGKTTTSIGLSMSLNRIGKKSIVTLREPSLGPTLGLKGGATGGGRSRVLPSDEINLHFTGDMHAVASAHNLLAAVLDSHIKHGNELKIDITRVFWKRTMDMNDRALRSIVIGLGGSANGFPREDSFIITAASEVMAILALSENMKDLKERLGKIIVALDADRKIVRISDLGIQGAMAVLLKDAINPNLVQTTEGTPALIHCGPFANIAHGTNSIIATKMAMKLSEYTVTEAGFGADLGAEKFIDFVSRVGGFYPNAAVLVATVRALKYHGGANLKNIHEENLEALKEGFKNLRVHVENLRKFNLPVVVALNRFSTDTEKEIAYVVKECEKLGVRVAVSEVFKKGSEGGVELAKAVAEAAKDVEPAYLYEMNDPVEKKIEILAKEIYRAGRVEFSDTAKNALKFIKKHGFDELPVIVAKTPKSISHDPSLRGAPEGYTFVVSDLFVSAGAGFVVALSGDINLMPGLPKKPNALNMDVDDSGNIVGVS</sequence>
<proteinExistence type="evidence at protein level"/>
<evidence type="ECO:0000255" key="1">
    <source>
        <dbReference type="HAMAP-Rule" id="MF_01543"/>
    </source>
</evidence>
<evidence type="ECO:0007829" key="2">
    <source>
        <dbReference type="PDB" id="3DO6"/>
    </source>
</evidence>
<dbReference type="EC" id="6.3.4.3" evidence="1"/>
<dbReference type="EMBL" id="AE000512">
    <property type="protein sequence ID" value="AAD36830.1"/>
    <property type="molecule type" value="Genomic_DNA"/>
</dbReference>
<dbReference type="PIR" id="E72212">
    <property type="entry name" value="E72212"/>
</dbReference>
<dbReference type="RefSeq" id="NP_229563.1">
    <property type="nucleotide sequence ID" value="NC_000853.1"/>
</dbReference>
<dbReference type="RefSeq" id="WP_010865397.1">
    <property type="nucleotide sequence ID" value="NC_000853.1"/>
</dbReference>
<dbReference type="PDB" id="3DO6">
    <property type="method" value="X-ray"/>
    <property type="resolution" value="1.85 A"/>
    <property type="chains" value="A/B=1-542"/>
</dbReference>
<dbReference type="PDBsum" id="3DO6"/>
<dbReference type="SMR" id="Q9X287"/>
<dbReference type="STRING" id="243274.TM_1766"/>
<dbReference type="PaxDb" id="243274-THEMA_05395"/>
<dbReference type="EnsemblBacteria" id="AAD36830">
    <property type="protein sequence ID" value="AAD36830"/>
    <property type="gene ID" value="TM_1766"/>
</dbReference>
<dbReference type="KEGG" id="tma:TM1766"/>
<dbReference type="KEGG" id="tmi:THEMA_05395"/>
<dbReference type="KEGG" id="tmm:Tmari_1775"/>
<dbReference type="KEGG" id="tmw:THMA_1810"/>
<dbReference type="eggNOG" id="COG2759">
    <property type="taxonomic scope" value="Bacteria"/>
</dbReference>
<dbReference type="InParanoid" id="Q9X287"/>
<dbReference type="OrthoDB" id="9761733at2"/>
<dbReference type="UniPathway" id="UPA00193"/>
<dbReference type="EvolutionaryTrace" id="Q9X287"/>
<dbReference type="Proteomes" id="UP000008183">
    <property type="component" value="Chromosome"/>
</dbReference>
<dbReference type="GO" id="GO:0005524">
    <property type="term" value="F:ATP binding"/>
    <property type="evidence" value="ECO:0007669"/>
    <property type="project" value="UniProtKB-UniRule"/>
</dbReference>
<dbReference type="GO" id="GO:0004329">
    <property type="term" value="F:formate-tetrahydrofolate ligase activity"/>
    <property type="evidence" value="ECO:0007669"/>
    <property type="project" value="UniProtKB-UniRule"/>
</dbReference>
<dbReference type="GO" id="GO:0035999">
    <property type="term" value="P:tetrahydrofolate interconversion"/>
    <property type="evidence" value="ECO:0007669"/>
    <property type="project" value="UniProtKB-UniRule"/>
</dbReference>
<dbReference type="CDD" id="cd00477">
    <property type="entry name" value="FTHFS"/>
    <property type="match status" value="1"/>
</dbReference>
<dbReference type="FunFam" id="3.30.1510.10:FF:000001">
    <property type="entry name" value="Formate--tetrahydrofolate ligase"/>
    <property type="match status" value="1"/>
</dbReference>
<dbReference type="FunFam" id="3.10.410.10:FF:000001">
    <property type="entry name" value="Putative formate--tetrahydrofolate ligase"/>
    <property type="match status" value="1"/>
</dbReference>
<dbReference type="Gene3D" id="3.30.1510.10">
    <property type="entry name" value="Domain 2, N(10)-formyltetrahydrofolate synthetase"/>
    <property type="match status" value="1"/>
</dbReference>
<dbReference type="Gene3D" id="3.10.410.10">
    <property type="entry name" value="Formyltetrahydrofolate synthetase, domain 3"/>
    <property type="match status" value="1"/>
</dbReference>
<dbReference type="Gene3D" id="3.40.50.300">
    <property type="entry name" value="P-loop containing nucleotide triphosphate hydrolases"/>
    <property type="match status" value="1"/>
</dbReference>
<dbReference type="HAMAP" id="MF_01543">
    <property type="entry name" value="FTHFS"/>
    <property type="match status" value="1"/>
</dbReference>
<dbReference type="InterPro" id="IPR000559">
    <property type="entry name" value="Formate_THF_ligase"/>
</dbReference>
<dbReference type="InterPro" id="IPR020628">
    <property type="entry name" value="Formate_THF_ligase_CS"/>
</dbReference>
<dbReference type="InterPro" id="IPR027417">
    <property type="entry name" value="P-loop_NTPase"/>
</dbReference>
<dbReference type="NCBIfam" id="NF010030">
    <property type="entry name" value="PRK13505.1"/>
    <property type="match status" value="1"/>
</dbReference>
<dbReference type="Pfam" id="PF01268">
    <property type="entry name" value="FTHFS"/>
    <property type="match status" value="1"/>
</dbReference>
<dbReference type="SUPFAM" id="SSF52540">
    <property type="entry name" value="P-loop containing nucleoside triphosphate hydrolases"/>
    <property type="match status" value="1"/>
</dbReference>
<dbReference type="PROSITE" id="PS00721">
    <property type="entry name" value="FTHFS_1"/>
    <property type="match status" value="1"/>
</dbReference>
<dbReference type="PROSITE" id="PS00722">
    <property type="entry name" value="FTHFS_2"/>
    <property type="match status" value="1"/>
</dbReference>
<keyword id="KW-0002">3D-structure</keyword>
<keyword id="KW-0067">ATP-binding</keyword>
<keyword id="KW-0436">Ligase</keyword>
<keyword id="KW-0547">Nucleotide-binding</keyword>
<keyword id="KW-0554">One-carbon metabolism</keyword>
<keyword id="KW-1185">Reference proteome</keyword>
<comment type="catalytic activity">
    <reaction evidence="1">
        <text>(6S)-5,6,7,8-tetrahydrofolate + formate + ATP = (6R)-10-formyltetrahydrofolate + ADP + phosphate</text>
        <dbReference type="Rhea" id="RHEA:20221"/>
        <dbReference type="ChEBI" id="CHEBI:15740"/>
        <dbReference type="ChEBI" id="CHEBI:30616"/>
        <dbReference type="ChEBI" id="CHEBI:43474"/>
        <dbReference type="ChEBI" id="CHEBI:57453"/>
        <dbReference type="ChEBI" id="CHEBI:195366"/>
        <dbReference type="ChEBI" id="CHEBI:456216"/>
        <dbReference type="EC" id="6.3.4.3"/>
    </reaction>
</comment>
<comment type="pathway">
    <text evidence="1">One-carbon metabolism; tetrahydrofolate interconversion.</text>
</comment>
<comment type="similarity">
    <text evidence="1">Belongs to the formate--tetrahydrofolate ligase family.</text>
</comment>
<feature type="chain" id="PRO_0000199403" description="Formate--tetrahydrofolate ligase">
    <location>
        <begin position="1"/>
        <end position="542"/>
    </location>
</feature>
<feature type="binding site" evidence="1">
    <location>
        <begin position="53"/>
        <end position="60"/>
    </location>
    <ligand>
        <name>ATP</name>
        <dbReference type="ChEBI" id="CHEBI:30616"/>
    </ligand>
</feature>
<feature type="helix" evidence="2">
    <location>
        <begin position="4"/>
        <end position="10"/>
    </location>
</feature>
<feature type="helix" evidence="2">
    <location>
        <begin position="15"/>
        <end position="17"/>
    </location>
</feature>
<feature type="strand" evidence="2">
    <location>
        <begin position="18"/>
        <end position="21"/>
    </location>
</feature>
<feature type="turn" evidence="2">
    <location>
        <begin position="22"/>
        <end position="24"/>
    </location>
</feature>
<feature type="strand" evidence="2">
    <location>
        <begin position="25"/>
        <end position="28"/>
    </location>
</feature>
<feature type="helix" evidence="2">
    <location>
        <begin position="32"/>
        <end position="35"/>
    </location>
</feature>
<feature type="turn" evidence="2">
    <location>
        <begin position="36"/>
        <end position="38"/>
    </location>
</feature>
<feature type="strand" evidence="2">
    <location>
        <begin position="43"/>
        <end position="51"/>
    </location>
</feature>
<feature type="helix" evidence="2">
    <location>
        <begin position="59"/>
        <end position="72"/>
    </location>
</feature>
<feature type="strand" evidence="2">
    <location>
        <begin position="77"/>
        <end position="81"/>
    </location>
</feature>
<feature type="helix" evidence="2">
    <location>
        <begin position="86"/>
        <end position="91"/>
    </location>
</feature>
<feature type="strand" evidence="2">
    <location>
        <begin position="102"/>
        <end position="106"/>
    </location>
</feature>
<feature type="helix" evidence="2">
    <location>
        <begin position="107"/>
        <end position="111"/>
    </location>
</feature>
<feature type="turn" evidence="2">
    <location>
        <begin position="112"/>
        <end position="115"/>
    </location>
</feature>
<feature type="helix" evidence="2">
    <location>
        <begin position="117"/>
        <end position="137"/>
    </location>
</feature>
<feature type="strand" evidence="2">
    <location>
        <begin position="144"/>
        <end position="149"/>
    </location>
</feature>
<feature type="strand" evidence="2">
    <location>
        <begin position="153"/>
        <end position="157"/>
    </location>
</feature>
<feature type="helix" evidence="2">
    <location>
        <begin position="160"/>
        <end position="162"/>
    </location>
</feature>
<feature type="strand" evidence="2">
    <location>
        <begin position="163"/>
        <end position="168"/>
    </location>
</feature>
<feature type="helix" evidence="2">
    <location>
        <begin position="172"/>
        <end position="174"/>
    </location>
</feature>
<feature type="strand" evidence="2">
    <location>
        <begin position="178"/>
        <end position="180"/>
    </location>
</feature>
<feature type="strand" evidence="2">
    <location>
        <begin position="182"/>
        <end position="184"/>
    </location>
</feature>
<feature type="helix" evidence="2">
    <location>
        <begin position="185"/>
        <end position="187"/>
    </location>
</feature>
<feature type="helix" evidence="2">
    <location>
        <begin position="189"/>
        <end position="196"/>
    </location>
</feature>
<feature type="helix" evidence="2">
    <location>
        <begin position="200"/>
        <end position="208"/>
    </location>
</feature>
<feature type="strand" evidence="2">
    <location>
        <begin position="211"/>
        <end position="215"/>
    </location>
</feature>
<feature type="strand" evidence="2">
    <location>
        <begin position="220"/>
        <end position="222"/>
    </location>
</feature>
<feature type="helix" evidence="2">
    <location>
        <begin position="223"/>
        <end position="226"/>
    </location>
</feature>
<feature type="helix" evidence="2">
    <location>
        <begin position="229"/>
        <end position="235"/>
    </location>
</feature>
<feature type="turn" evidence="2">
    <location>
        <begin position="236"/>
        <end position="240"/>
    </location>
</feature>
<feature type="strand" evidence="2">
    <location>
        <begin position="243"/>
        <end position="247"/>
    </location>
</feature>
<feature type="strand" evidence="2">
    <location>
        <begin position="252"/>
        <end position="255"/>
    </location>
</feature>
<feature type="strand" evidence="2">
    <location>
        <begin position="261"/>
        <end position="264"/>
    </location>
</feature>
<feature type="helix" evidence="2">
    <location>
        <begin position="270"/>
        <end position="279"/>
    </location>
</feature>
<feature type="strand" evidence="2">
    <location>
        <begin position="281"/>
        <end position="290"/>
    </location>
</feature>
<feature type="turn" evidence="2">
    <location>
        <begin position="291"/>
        <end position="293"/>
    </location>
</feature>
<feature type="helix" evidence="2">
    <location>
        <begin position="294"/>
        <end position="300"/>
    </location>
</feature>
<feature type="helix" evidence="2">
    <location>
        <begin position="302"/>
        <end position="306"/>
    </location>
</feature>
<feature type="strand" evidence="2">
    <location>
        <begin position="311"/>
        <end position="317"/>
    </location>
</feature>
<feature type="helix" evidence="2">
    <location>
        <begin position="319"/>
        <end position="325"/>
    </location>
</feature>
<feature type="helix" evidence="2">
    <location>
        <begin position="330"/>
        <end position="332"/>
    </location>
</feature>
<feature type="helix" evidence="2">
    <location>
        <begin position="338"/>
        <end position="357"/>
    </location>
</feature>
<feature type="strand" evidence="2">
    <location>
        <begin position="362"/>
        <end position="367"/>
    </location>
</feature>
<feature type="helix" evidence="2">
    <location>
        <begin position="374"/>
        <end position="385"/>
    </location>
</feature>
<feature type="turn" evidence="2">
    <location>
        <begin position="386"/>
        <end position="388"/>
    </location>
</feature>
<feature type="strand" evidence="2">
    <location>
        <begin position="390"/>
        <end position="394"/>
    </location>
</feature>
<feature type="helix" evidence="2">
    <location>
        <begin position="396"/>
        <end position="399"/>
    </location>
</feature>
<feature type="helix" evidence="2">
    <location>
        <begin position="400"/>
        <end position="403"/>
    </location>
</feature>
<feature type="helix" evidence="2">
    <location>
        <begin position="405"/>
        <end position="414"/>
    </location>
</feature>
<feature type="helix" evidence="2">
    <location>
        <begin position="430"/>
        <end position="440"/>
    </location>
</feature>
<feature type="strand" evidence="2">
    <location>
        <begin position="445"/>
        <end position="449"/>
    </location>
</feature>
<feature type="helix" evidence="2">
    <location>
        <begin position="451"/>
        <end position="462"/>
    </location>
</feature>
<feature type="strand" evidence="2">
    <location>
        <begin position="470"/>
        <end position="473"/>
    </location>
</feature>
<feature type="strand" evidence="2">
    <location>
        <begin position="476"/>
        <end position="481"/>
    </location>
</feature>
<feature type="strand" evidence="2">
    <location>
        <begin position="493"/>
        <end position="496"/>
    </location>
</feature>
<feature type="strand" evidence="2">
    <location>
        <begin position="498"/>
        <end position="502"/>
    </location>
</feature>
<feature type="turn" evidence="2">
    <location>
        <begin position="503"/>
        <end position="506"/>
    </location>
</feature>
<feature type="strand" evidence="2">
    <location>
        <begin position="507"/>
        <end position="511"/>
    </location>
</feature>
<feature type="helix" evidence="2">
    <location>
        <begin position="526"/>
        <end position="529"/>
    </location>
</feature>
<feature type="strand" evidence="2">
    <location>
        <begin position="538"/>
        <end position="540"/>
    </location>
</feature>
<gene>
    <name evidence="1" type="primary">fhs</name>
    <name type="ordered locus">TM_1766</name>
</gene>
<reference key="1">
    <citation type="journal article" date="1999" name="Nature">
        <title>Evidence for lateral gene transfer between Archaea and Bacteria from genome sequence of Thermotoga maritima.</title>
        <authorList>
            <person name="Nelson K.E."/>
            <person name="Clayton R.A."/>
            <person name="Gill S.R."/>
            <person name="Gwinn M.L."/>
            <person name="Dodson R.J."/>
            <person name="Haft D.H."/>
            <person name="Hickey E.K."/>
            <person name="Peterson J.D."/>
            <person name="Nelson W.C."/>
            <person name="Ketchum K.A."/>
            <person name="McDonald L.A."/>
            <person name="Utterback T.R."/>
            <person name="Malek J.A."/>
            <person name="Linher K.D."/>
            <person name="Garrett M.M."/>
            <person name="Stewart A.M."/>
            <person name="Cotton M.D."/>
            <person name="Pratt M.S."/>
            <person name="Phillips C.A."/>
            <person name="Richardson D.L."/>
            <person name="Heidelberg J.F."/>
            <person name="Sutton G.G."/>
            <person name="Fleischmann R.D."/>
            <person name="Eisen J.A."/>
            <person name="White O."/>
            <person name="Salzberg S.L."/>
            <person name="Smith H.O."/>
            <person name="Venter J.C."/>
            <person name="Fraser C.M."/>
        </authorList>
    </citation>
    <scope>NUCLEOTIDE SEQUENCE [LARGE SCALE GENOMIC DNA]</scope>
    <source>
        <strain>ATCC 43589 / DSM 3109 / JCM 10099 / NBRC 100826 / MSB8</strain>
    </source>
</reference>
<accession>Q9X287</accession>
<name>FTHS_THEMA</name>
<protein>
    <recommendedName>
        <fullName evidence="1">Formate--tetrahydrofolate ligase</fullName>
        <ecNumber evidence="1">6.3.4.3</ecNumber>
    </recommendedName>
    <alternativeName>
        <fullName evidence="1">Formyltetrahydrofolate synthetase</fullName>
        <shortName evidence="1">FHS</shortName>
        <shortName evidence="1">FTHFS</shortName>
    </alternativeName>
</protein>
<organism>
    <name type="scientific">Thermotoga maritima (strain ATCC 43589 / DSM 3109 / JCM 10099 / NBRC 100826 / MSB8)</name>
    <dbReference type="NCBI Taxonomy" id="243274"/>
    <lineage>
        <taxon>Bacteria</taxon>
        <taxon>Thermotogati</taxon>
        <taxon>Thermotogota</taxon>
        <taxon>Thermotogae</taxon>
        <taxon>Thermotogales</taxon>
        <taxon>Thermotogaceae</taxon>
        <taxon>Thermotoga</taxon>
    </lineage>
</organism>